<name>RL28_AGRFC</name>
<reference key="1">
    <citation type="journal article" date="2001" name="Science">
        <title>The genome of the natural genetic engineer Agrobacterium tumefaciens C58.</title>
        <authorList>
            <person name="Wood D.W."/>
            <person name="Setubal J.C."/>
            <person name="Kaul R."/>
            <person name="Monks D.E."/>
            <person name="Kitajima J.P."/>
            <person name="Okura V.K."/>
            <person name="Zhou Y."/>
            <person name="Chen L."/>
            <person name="Wood G.E."/>
            <person name="Almeida N.F. Jr."/>
            <person name="Woo L."/>
            <person name="Chen Y."/>
            <person name="Paulsen I.T."/>
            <person name="Eisen J.A."/>
            <person name="Karp P.D."/>
            <person name="Bovee D. Sr."/>
            <person name="Chapman P."/>
            <person name="Clendenning J."/>
            <person name="Deatherage G."/>
            <person name="Gillet W."/>
            <person name="Grant C."/>
            <person name="Kutyavin T."/>
            <person name="Levy R."/>
            <person name="Li M.-J."/>
            <person name="McClelland E."/>
            <person name="Palmieri A."/>
            <person name="Raymond C."/>
            <person name="Rouse G."/>
            <person name="Saenphimmachak C."/>
            <person name="Wu Z."/>
            <person name="Romero P."/>
            <person name="Gordon D."/>
            <person name="Zhang S."/>
            <person name="Yoo H."/>
            <person name="Tao Y."/>
            <person name="Biddle P."/>
            <person name="Jung M."/>
            <person name="Krespan W."/>
            <person name="Perry M."/>
            <person name="Gordon-Kamm B."/>
            <person name="Liao L."/>
            <person name="Kim S."/>
            <person name="Hendrick C."/>
            <person name="Zhao Z.-Y."/>
            <person name="Dolan M."/>
            <person name="Chumley F."/>
            <person name="Tingey S.V."/>
            <person name="Tomb J.-F."/>
            <person name="Gordon M.P."/>
            <person name="Olson M.V."/>
            <person name="Nester E.W."/>
        </authorList>
    </citation>
    <scope>NUCLEOTIDE SEQUENCE [LARGE SCALE GENOMIC DNA]</scope>
    <source>
        <strain>C58 / ATCC 33970</strain>
    </source>
</reference>
<reference key="2">
    <citation type="journal article" date="2001" name="Science">
        <title>Genome sequence of the plant pathogen and biotechnology agent Agrobacterium tumefaciens C58.</title>
        <authorList>
            <person name="Goodner B."/>
            <person name="Hinkle G."/>
            <person name="Gattung S."/>
            <person name="Miller N."/>
            <person name="Blanchard M."/>
            <person name="Qurollo B."/>
            <person name="Goldman B.S."/>
            <person name="Cao Y."/>
            <person name="Askenazi M."/>
            <person name="Halling C."/>
            <person name="Mullin L."/>
            <person name="Houmiel K."/>
            <person name="Gordon J."/>
            <person name="Vaudin M."/>
            <person name="Iartchouk O."/>
            <person name="Epp A."/>
            <person name="Liu F."/>
            <person name="Wollam C."/>
            <person name="Allinger M."/>
            <person name="Doughty D."/>
            <person name="Scott C."/>
            <person name="Lappas C."/>
            <person name="Markelz B."/>
            <person name="Flanagan C."/>
            <person name="Crowell C."/>
            <person name="Gurson J."/>
            <person name="Lomo C."/>
            <person name="Sear C."/>
            <person name="Strub G."/>
            <person name="Cielo C."/>
            <person name="Slater S."/>
        </authorList>
    </citation>
    <scope>NUCLEOTIDE SEQUENCE [LARGE SCALE GENOMIC DNA]</scope>
    <source>
        <strain>C58 / ATCC 33970</strain>
    </source>
</reference>
<protein>
    <recommendedName>
        <fullName evidence="1">Large ribosomal subunit protein bL28</fullName>
    </recommendedName>
    <alternativeName>
        <fullName evidence="2">50S ribosomal protein L28</fullName>
    </alternativeName>
</protein>
<sequence>MSRVCELTGKGVQTGNNVSHANNKTKRRFLPNLCQVTLISDALGQRFRLRVSAAALRSVEHRGGLDAFLLKSGENELSMRARLLRRQIAKKTAEAA</sequence>
<comment type="similarity">
    <text evidence="1">Belongs to the bacterial ribosomal protein bL28 family.</text>
</comment>
<evidence type="ECO:0000255" key="1">
    <source>
        <dbReference type="HAMAP-Rule" id="MF_00373"/>
    </source>
</evidence>
<evidence type="ECO:0000305" key="2"/>
<feature type="chain" id="PRO_0000178416" description="Large ribosomal subunit protein bL28">
    <location>
        <begin position="1"/>
        <end position="96"/>
    </location>
</feature>
<keyword id="KW-1185">Reference proteome</keyword>
<keyword id="KW-0687">Ribonucleoprotein</keyword>
<keyword id="KW-0689">Ribosomal protein</keyword>
<accession>Q8U9V8</accession>
<accession>V9H0I0</accession>
<gene>
    <name evidence="1" type="primary">rpmB</name>
    <name type="ordered locus">Atu3617</name>
    <name type="ORF">AGR_L_2417.1</name>
</gene>
<proteinExistence type="inferred from homology"/>
<dbReference type="EMBL" id="AE007870">
    <property type="protein sequence ID" value="AAK89779.2"/>
    <property type="molecule type" value="Genomic_DNA"/>
</dbReference>
<dbReference type="PIR" id="AG3001">
    <property type="entry name" value="AG3001"/>
</dbReference>
<dbReference type="RefSeq" id="NP_356994.2">
    <property type="nucleotide sequence ID" value="NC_003063.2"/>
</dbReference>
<dbReference type="RefSeq" id="WP_003509888.1">
    <property type="nucleotide sequence ID" value="NC_003063.2"/>
</dbReference>
<dbReference type="SMR" id="Q8U9V8"/>
<dbReference type="STRING" id="176299.Atu3617"/>
<dbReference type="EnsemblBacteria" id="AAK89779">
    <property type="protein sequence ID" value="AAK89779"/>
    <property type="gene ID" value="Atu3617"/>
</dbReference>
<dbReference type="GeneID" id="97366591"/>
<dbReference type="KEGG" id="atu:Atu3617"/>
<dbReference type="PATRIC" id="fig|176299.10.peg.3464"/>
<dbReference type="eggNOG" id="COG0227">
    <property type="taxonomic scope" value="Bacteria"/>
</dbReference>
<dbReference type="HOGENOM" id="CLU_064548_4_2_5"/>
<dbReference type="OrthoDB" id="9805609at2"/>
<dbReference type="PhylomeDB" id="Q8U9V8"/>
<dbReference type="BioCyc" id="AGRO:ATU3617-MONOMER"/>
<dbReference type="PRO" id="PR:Q8U9V8"/>
<dbReference type="Proteomes" id="UP000000813">
    <property type="component" value="Chromosome linear"/>
</dbReference>
<dbReference type="GO" id="GO:0022625">
    <property type="term" value="C:cytosolic large ribosomal subunit"/>
    <property type="evidence" value="ECO:0007669"/>
    <property type="project" value="TreeGrafter"/>
</dbReference>
<dbReference type="GO" id="GO:0003735">
    <property type="term" value="F:structural constituent of ribosome"/>
    <property type="evidence" value="ECO:0007669"/>
    <property type="project" value="InterPro"/>
</dbReference>
<dbReference type="GO" id="GO:0006412">
    <property type="term" value="P:translation"/>
    <property type="evidence" value="ECO:0007669"/>
    <property type="project" value="UniProtKB-UniRule"/>
</dbReference>
<dbReference type="Gene3D" id="2.30.170.40">
    <property type="entry name" value="Ribosomal protein L28/L24"/>
    <property type="match status" value="1"/>
</dbReference>
<dbReference type="HAMAP" id="MF_00373">
    <property type="entry name" value="Ribosomal_bL28"/>
    <property type="match status" value="1"/>
</dbReference>
<dbReference type="InterPro" id="IPR026569">
    <property type="entry name" value="Ribosomal_bL28"/>
</dbReference>
<dbReference type="InterPro" id="IPR034704">
    <property type="entry name" value="Ribosomal_bL28/bL31-like_sf"/>
</dbReference>
<dbReference type="InterPro" id="IPR001383">
    <property type="entry name" value="Ribosomal_bL28_bact-type"/>
</dbReference>
<dbReference type="InterPro" id="IPR037147">
    <property type="entry name" value="Ribosomal_bL28_sf"/>
</dbReference>
<dbReference type="NCBIfam" id="TIGR00009">
    <property type="entry name" value="L28"/>
    <property type="match status" value="1"/>
</dbReference>
<dbReference type="PANTHER" id="PTHR13528">
    <property type="entry name" value="39S RIBOSOMAL PROTEIN L28, MITOCHONDRIAL"/>
    <property type="match status" value="1"/>
</dbReference>
<dbReference type="PANTHER" id="PTHR13528:SF2">
    <property type="entry name" value="LARGE RIBOSOMAL SUBUNIT PROTEIN BL28M"/>
    <property type="match status" value="1"/>
</dbReference>
<dbReference type="Pfam" id="PF00830">
    <property type="entry name" value="Ribosomal_L28"/>
    <property type="match status" value="1"/>
</dbReference>
<dbReference type="SUPFAM" id="SSF143800">
    <property type="entry name" value="L28p-like"/>
    <property type="match status" value="1"/>
</dbReference>
<organism>
    <name type="scientific">Agrobacterium fabrum (strain C58 / ATCC 33970)</name>
    <name type="common">Agrobacterium tumefaciens (strain C58)</name>
    <dbReference type="NCBI Taxonomy" id="176299"/>
    <lineage>
        <taxon>Bacteria</taxon>
        <taxon>Pseudomonadati</taxon>
        <taxon>Pseudomonadota</taxon>
        <taxon>Alphaproteobacteria</taxon>
        <taxon>Hyphomicrobiales</taxon>
        <taxon>Rhizobiaceae</taxon>
        <taxon>Rhizobium/Agrobacterium group</taxon>
        <taxon>Agrobacterium</taxon>
        <taxon>Agrobacterium tumefaciens complex</taxon>
    </lineage>
</organism>